<gene>
    <name type="ORF">CIMG_10297</name>
</gene>
<comment type="function">
    <text evidence="2">Component of the eukaryotic translation initiation factor 3 (eIF-3) complex, which is involved in protein synthesis of a specialized repertoire of mRNAs and, together with other initiation factors, stimulates binding of mRNA and methionyl-tRNAi to the 40S ribosome. The eIF-3 complex specifically targets and initiates translation of a subset of mRNAs involved in cell proliferation.</text>
</comment>
<comment type="subunit">
    <text evidence="2">Component of the eukaryotic translation initiation factor 3 (eIF-3) complex.</text>
</comment>
<comment type="subcellular location">
    <subcellularLocation>
        <location evidence="2">Cytoplasm</location>
    </subcellularLocation>
</comment>
<comment type="similarity">
    <text evidence="2">Belongs to the eIF-3 subunit H family.</text>
</comment>
<proteinExistence type="inferred from homology"/>
<sequence length="365" mass="40941">MAEKEQPLKAVQVEALVVMKIIKHSTQLFPTTATGSLVGMDVRGTLEVTNAFPFPIVDIPADSHLDGAPANAAAAAPRAKSNAVYQSEMIKMLREVNIDANNVGWYTSANMGNFVNLNIIENQYFYQKELNERTVALVHDVSRSSQGALSLRAFRLSPQFMAAFKENKFTTENLQKSNLRYQDIFVELPVQIHNSHLLTSYLHQLPSPPPAENLDLPPSLAALTNDPLASSSLLTPNFDNLALSIDPFLEKNCDMLLESIETHHTENNNFQYYQRSLAREQTKIAAWQAKRKAENATRAQLKQPLLAEDEWQRLFKLPQEPSRLESMLNTRQVEQYSRQIDGFVSATTGKMFAVRGNLLPGETQV</sequence>
<protein>
    <recommendedName>
        <fullName evidence="2">Eukaryotic translation initiation factor 3 subunit H</fullName>
        <shortName evidence="2">eIF3h</shortName>
    </recommendedName>
</protein>
<keyword id="KW-0175">Coiled coil</keyword>
<keyword id="KW-0963">Cytoplasm</keyword>
<keyword id="KW-0396">Initiation factor</keyword>
<keyword id="KW-0648">Protein biosynthesis</keyword>
<keyword id="KW-1185">Reference proteome</keyword>
<reference key="1">
    <citation type="journal article" date="2009" name="Genome Res.">
        <title>Comparative genomic analyses of the human fungal pathogens Coccidioides and their relatives.</title>
        <authorList>
            <person name="Sharpton T.J."/>
            <person name="Stajich J.E."/>
            <person name="Rounsley S.D."/>
            <person name="Gardner M.J."/>
            <person name="Wortman J.R."/>
            <person name="Jordar V.S."/>
            <person name="Maiti R."/>
            <person name="Kodira C.D."/>
            <person name="Neafsey D.E."/>
            <person name="Zeng Q."/>
            <person name="Hung C.-Y."/>
            <person name="McMahan C."/>
            <person name="Muszewska A."/>
            <person name="Grynberg M."/>
            <person name="Mandel M.A."/>
            <person name="Kellner E.M."/>
            <person name="Barker B.M."/>
            <person name="Galgiani J.N."/>
            <person name="Orbach M.J."/>
            <person name="Kirkland T.N."/>
            <person name="Cole G.T."/>
            <person name="Henn M.R."/>
            <person name="Birren B.W."/>
            <person name="Taylor J.W."/>
        </authorList>
    </citation>
    <scope>NUCLEOTIDE SEQUENCE [LARGE SCALE GENOMIC DNA]</scope>
    <source>
        <strain>RS</strain>
    </source>
</reference>
<reference key="2">
    <citation type="journal article" date="2010" name="Genome Res.">
        <title>Population genomic sequencing of Coccidioides fungi reveals recent hybridization and transposon control.</title>
        <authorList>
            <person name="Neafsey D.E."/>
            <person name="Barker B.M."/>
            <person name="Sharpton T.J."/>
            <person name="Stajich J.E."/>
            <person name="Park D.J."/>
            <person name="Whiston E."/>
            <person name="Hung C.-Y."/>
            <person name="McMahan C."/>
            <person name="White J."/>
            <person name="Sykes S."/>
            <person name="Heiman D."/>
            <person name="Young S."/>
            <person name="Zeng Q."/>
            <person name="Abouelleil A."/>
            <person name="Aftuck L."/>
            <person name="Bessette D."/>
            <person name="Brown A."/>
            <person name="FitzGerald M."/>
            <person name="Lui A."/>
            <person name="Macdonald J.P."/>
            <person name="Priest M."/>
            <person name="Orbach M.J."/>
            <person name="Galgiani J.N."/>
            <person name="Kirkland T.N."/>
            <person name="Cole G.T."/>
            <person name="Birren B.W."/>
            <person name="Henn M.R."/>
            <person name="Taylor J.W."/>
            <person name="Rounsley S.D."/>
        </authorList>
    </citation>
    <scope>GENOME REANNOTATION</scope>
    <source>
        <strain>RS</strain>
    </source>
</reference>
<organism>
    <name type="scientific">Coccidioides immitis (strain RS)</name>
    <name type="common">Valley fever fungus</name>
    <dbReference type="NCBI Taxonomy" id="246410"/>
    <lineage>
        <taxon>Eukaryota</taxon>
        <taxon>Fungi</taxon>
        <taxon>Dikarya</taxon>
        <taxon>Ascomycota</taxon>
        <taxon>Pezizomycotina</taxon>
        <taxon>Eurotiomycetes</taxon>
        <taxon>Eurotiomycetidae</taxon>
        <taxon>Onygenales</taxon>
        <taxon>Onygenaceae</taxon>
        <taxon>Coccidioides</taxon>
    </lineage>
</organism>
<evidence type="ECO:0000255" key="1"/>
<evidence type="ECO:0000255" key="2">
    <source>
        <dbReference type="HAMAP-Rule" id="MF_03007"/>
    </source>
</evidence>
<evidence type="ECO:0000255" key="3">
    <source>
        <dbReference type="PROSITE-ProRule" id="PRU01182"/>
    </source>
</evidence>
<name>EIF3H_COCIM</name>
<dbReference type="EMBL" id="GG704915">
    <property type="protein sequence ID" value="EAS27692.3"/>
    <property type="molecule type" value="Genomic_DNA"/>
</dbReference>
<dbReference type="RefSeq" id="XP_001239275.2">
    <property type="nucleotide sequence ID" value="XM_001239274.2"/>
</dbReference>
<dbReference type="SMR" id="Q1DHB6"/>
<dbReference type="STRING" id="246410.Q1DHB6"/>
<dbReference type="GeneID" id="4557882"/>
<dbReference type="KEGG" id="cim:CIMG_10297"/>
<dbReference type="VEuPathDB" id="FungiDB:CIMG_10297"/>
<dbReference type="InParanoid" id="Q1DHB6"/>
<dbReference type="OMA" id="WYQSTYF"/>
<dbReference type="OrthoDB" id="10265695at2759"/>
<dbReference type="Proteomes" id="UP000001261">
    <property type="component" value="Unassembled WGS sequence"/>
</dbReference>
<dbReference type="GO" id="GO:0016282">
    <property type="term" value="C:eukaryotic 43S preinitiation complex"/>
    <property type="evidence" value="ECO:0007669"/>
    <property type="project" value="UniProtKB-UniRule"/>
</dbReference>
<dbReference type="GO" id="GO:0033290">
    <property type="term" value="C:eukaryotic 48S preinitiation complex"/>
    <property type="evidence" value="ECO:0007669"/>
    <property type="project" value="UniProtKB-UniRule"/>
</dbReference>
<dbReference type="GO" id="GO:0005852">
    <property type="term" value="C:eukaryotic translation initiation factor 3 complex"/>
    <property type="evidence" value="ECO:0007669"/>
    <property type="project" value="UniProtKB-UniRule"/>
</dbReference>
<dbReference type="GO" id="GO:0008237">
    <property type="term" value="F:metallopeptidase activity"/>
    <property type="evidence" value="ECO:0007669"/>
    <property type="project" value="InterPro"/>
</dbReference>
<dbReference type="GO" id="GO:0003743">
    <property type="term" value="F:translation initiation factor activity"/>
    <property type="evidence" value="ECO:0007669"/>
    <property type="project" value="UniProtKB-UniRule"/>
</dbReference>
<dbReference type="GO" id="GO:0001732">
    <property type="term" value="P:formation of cytoplasmic translation initiation complex"/>
    <property type="evidence" value="ECO:0007669"/>
    <property type="project" value="UniProtKB-UniRule"/>
</dbReference>
<dbReference type="CDD" id="cd08065">
    <property type="entry name" value="MPN_eIF3h"/>
    <property type="match status" value="1"/>
</dbReference>
<dbReference type="FunFam" id="3.40.140.10:FF:000052">
    <property type="entry name" value="Eukaryotic translation initiation factor 3 subunit H"/>
    <property type="match status" value="1"/>
</dbReference>
<dbReference type="Gene3D" id="3.40.140.10">
    <property type="entry name" value="Cytidine Deaminase, domain 2"/>
    <property type="match status" value="1"/>
</dbReference>
<dbReference type="HAMAP" id="MF_03007">
    <property type="entry name" value="eIF3h"/>
    <property type="match status" value="1"/>
</dbReference>
<dbReference type="InterPro" id="IPR027524">
    <property type="entry name" value="eIF3h"/>
</dbReference>
<dbReference type="InterPro" id="IPR045810">
    <property type="entry name" value="eIF3h_C"/>
</dbReference>
<dbReference type="InterPro" id="IPR000555">
    <property type="entry name" value="JAMM/MPN+_dom"/>
</dbReference>
<dbReference type="InterPro" id="IPR050242">
    <property type="entry name" value="JAMM_MPN+_peptidase_M67A"/>
</dbReference>
<dbReference type="InterPro" id="IPR037518">
    <property type="entry name" value="MPN"/>
</dbReference>
<dbReference type="PANTHER" id="PTHR10410">
    <property type="entry name" value="EUKARYOTIC TRANSLATION INITIATION FACTOR 3 -RELATED"/>
    <property type="match status" value="1"/>
</dbReference>
<dbReference type="Pfam" id="PF19445">
    <property type="entry name" value="eIF3h_C"/>
    <property type="match status" value="2"/>
</dbReference>
<dbReference type="Pfam" id="PF01398">
    <property type="entry name" value="JAB"/>
    <property type="match status" value="1"/>
</dbReference>
<dbReference type="SMART" id="SM00232">
    <property type="entry name" value="JAB_MPN"/>
    <property type="match status" value="1"/>
</dbReference>
<dbReference type="PROSITE" id="PS50249">
    <property type="entry name" value="MPN"/>
    <property type="match status" value="1"/>
</dbReference>
<feature type="chain" id="PRO_0000365206" description="Eukaryotic translation initiation factor 3 subunit H">
    <location>
        <begin position="1"/>
        <end position="365"/>
    </location>
</feature>
<feature type="domain" description="MPN" evidence="3">
    <location>
        <begin position="11"/>
        <end position="160"/>
    </location>
</feature>
<feature type="coiled-coil region" evidence="1">
    <location>
        <begin position="273"/>
        <end position="303"/>
    </location>
</feature>
<accession>Q1DHB6</accession>
<accession>I9NPI8</accession>